<evidence type="ECO:0000255" key="1">
    <source>
        <dbReference type="HAMAP-Rule" id="MF_01341"/>
    </source>
</evidence>
<evidence type="ECO:0000256" key="2">
    <source>
        <dbReference type="SAM" id="MobiDB-lite"/>
    </source>
</evidence>
<evidence type="ECO:0000305" key="3"/>
<gene>
    <name evidence="1" type="primary">rplO</name>
    <name type="ordered locus">Ssed_4299</name>
</gene>
<organism>
    <name type="scientific">Shewanella sediminis (strain HAW-EB3)</name>
    <dbReference type="NCBI Taxonomy" id="425104"/>
    <lineage>
        <taxon>Bacteria</taxon>
        <taxon>Pseudomonadati</taxon>
        <taxon>Pseudomonadota</taxon>
        <taxon>Gammaproteobacteria</taxon>
        <taxon>Alteromonadales</taxon>
        <taxon>Shewanellaceae</taxon>
        <taxon>Shewanella</taxon>
    </lineage>
</organism>
<reference key="1">
    <citation type="submission" date="2007-08" db="EMBL/GenBank/DDBJ databases">
        <title>Complete sequence of Shewanella sediminis HAW-EB3.</title>
        <authorList>
            <consortium name="US DOE Joint Genome Institute"/>
            <person name="Copeland A."/>
            <person name="Lucas S."/>
            <person name="Lapidus A."/>
            <person name="Barry K."/>
            <person name="Glavina del Rio T."/>
            <person name="Dalin E."/>
            <person name="Tice H."/>
            <person name="Pitluck S."/>
            <person name="Chertkov O."/>
            <person name="Brettin T."/>
            <person name="Bruce D."/>
            <person name="Detter J.C."/>
            <person name="Han C."/>
            <person name="Schmutz J."/>
            <person name="Larimer F."/>
            <person name="Land M."/>
            <person name="Hauser L."/>
            <person name="Kyrpides N."/>
            <person name="Kim E."/>
            <person name="Zhao J.-S."/>
            <person name="Richardson P."/>
        </authorList>
    </citation>
    <scope>NUCLEOTIDE SEQUENCE [LARGE SCALE GENOMIC DNA]</scope>
    <source>
        <strain>HAW-EB3</strain>
    </source>
</reference>
<protein>
    <recommendedName>
        <fullName evidence="1">Large ribosomal subunit protein uL15</fullName>
    </recommendedName>
    <alternativeName>
        <fullName evidence="3">50S ribosomal protein L15</fullName>
    </alternativeName>
</protein>
<proteinExistence type="inferred from homology"/>
<keyword id="KW-1185">Reference proteome</keyword>
<keyword id="KW-0687">Ribonucleoprotein</keyword>
<keyword id="KW-0689">Ribosomal protein</keyword>
<keyword id="KW-0694">RNA-binding</keyword>
<keyword id="KW-0699">rRNA-binding</keyword>
<dbReference type="EMBL" id="CP000821">
    <property type="protein sequence ID" value="ABV38903.1"/>
    <property type="molecule type" value="Genomic_DNA"/>
</dbReference>
<dbReference type="RefSeq" id="WP_012144632.1">
    <property type="nucleotide sequence ID" value="NC_009831.1"/>
</dbReference>
<dbReference type="SMR" id="A8G1D0"/>
<dbReference type="STRING" id="425104.Ssed_4299"/>
<dbReference type="KEGG" id="sse:Ssed_4299"/>
<dbReference type="eggNOG" id="COG0200">
    <property type="taxonomic scope" value="Bacteria"/>
</dbReference>
<dbReference type="HOGENOM" id="CLU_055188_4_2_6"/>
<dbReference type="OrthoDB" id="9810293at2"/>
<dbReference type="Proteomes" id="UP000002015">
    <property type="component" value="Chromosome"/>
</dbReference>
<dbReference type="GO" id="GO:0022625">
    <property type="term" value="C:cytosolic large ribosomal subunit"/>
    <property type="evidence" value="ECO:0007669"/>
    <property type="project" value="TreeGrafter"/>
</dbReference>
<dbReference type="GO" id="GO:0019843">
    <property type="term" value="F:rRNA binding"/>
    <property type="evidence" value="ECO:0007669"/>
    <property type="project" value="UniProtKB-UniRule"/>
</dbReference>
<dbReference type="GO" id="GO:0003735">
    <property type="term" value="F:structural constituent of ribosome"/>
    <property type="evidence" value="ECO:0007669"/>
    <property type="project" value="InterPro"/>
</dbReference>
<dbReference type="GO" id="GO:0006412">
    <property type="term" value="P:translation"/>
    <property type="evidence" value="ECO:0007669"/>
    <property type="project" value="UniProtKB-UniRule"/>
</dbReference>
<dbReference type="FunFam" id="3.100.10.10:FF:000003">
    <property type="entry name" value="50S ribosomal protein L15"/>
    <property type="match status" value="1"/>
</dbReference>
<dbReference type="Gene3D" id="3.100.10.10">
    <property type="match status" value="1"/>
</dbReference>
<dbReference type="HAMAP" id="MF_01341">
    <property type="entry name" value="Ribosomal_uL15"/>
    <property type="match status" value="1"/>
</dbReference>
<dbReference type="InterPro" id="IPR030878">
    <property type="entry name" value="Ribosomal_uL15"/>
</dbReference>
<dbReference type="InterPro" id="IPR021131">
    <property type="entry name" value="Ribosomal_uL15/eL18"/>
</dbReference>
<dbReference type="InterPro" id="IPR036227">
    <property type="entry name" value="Ribosomal_uL15/eL18_sf"/>
</dbReference>
<dbReference type="InterPro" id="IPR005749">
    <property type="entry name" value="Ribosomal_uL15_bac-type"/>
</dbReference>
<dbReference type="InterPro" id="IPR001196">
    <property type="entry name" value="Ribosomal_uL15_CS"/>
</dbReference>
<dbReference type="NCBIfam" id="TIGR01071">
    <property type="entry name" value="rplO_bact"/>
    <property type="match status" value="1"/>
</dbReference>
<dbReference type="PANTHER" id="PTHR12934">
    <property type="entry name" value="50S RIBOSOMAL PROTEIN L15"/>
    <property type="match status" value="1"/>
</dbReference>
<dbReference type="PANTHER" id="PTHR12934:SF11">
    <property type="entry name" value="LARGE RIBOSOMAL SUBUNIT PROTEIN UL15M"/>
    <property type="match status" value="1"/>
</dbReference>
<dbReference type="Pfam" id="PF00828">
    <property type="entry name" value="Ribosomal_L27A"/>
    <property type="match status" value="1"/>
</dbReference>
<dbReference type="SUPFAM" id="SSF52080">
    <property type="entry name" value="Ribosomal proteins L15p and L18e"/>
    <property type="match status" value="1"/>
</dbReference>
<dbReference type="PROSITE" id="PS00475">
    <property type="entry name" value="RIBOSOMAL_L15"/>
    <property type="match status" value="1"/>
</dbReference>
<comment type="function">
    <text evidence="1">Binds to the 23S rRNA.</text>
</comment>
<comment type="subunit">
    <text evidence="1">Part of the 50S ribosomal subunit.</text>
</comment>
<comment type="similarity">
    <text evidence="1">Belongs to the universal ribosomal protein uL15 family.</text>
</comment>
<name>RL15_SHESH</name>
<accession>A8G1D0</accession>
<sequence>MRLNTLSPAAGAKSAAKRVGRGIGSGTGKTCGRGHKGQKSRSGGGVRVGFEGGQMPLKIRLPKFGFTSRRALVTAEVRISELAKVNGDVVDLNALKDANLVTRNIQFAKIVLSGTIERPVTVKGLKVTKGARAAIEAAGGKIEE</sequence>
<feature type="chain" id="PRO_1000086733" description="Large ribosomal subunit protein uL15">
    <location>
        <begin position="1"/>
        <end position="144"/>
    </location>
</feature>
<feature type="region of interest" description="Disordered" evidence="2">
    <location>
        <begin position="1"/>
        <end position="49"/>
    </location>
</feature>
<feature type="compositionally biased region" description="Gly residues" evidence="2">
    <location>
        <begin position="21"/>
        <end position="31"/>
    </location>
</feature>